<comment type="function">
    <text evidence="1">Mitochondrial intermembrane chaperone that participates in the import and insertion of some multi-pass transmembrane proteins into the mitochondrial inner membrane. Also required for the transfer of beta-barrel precursors from the TOM complex to the sorting and assembly machinery (SAM complex) of the outer membrane. Acts as a chaperone-like protein that protects the hydrophobic precursors from aggregation and guide them through the mitochondrial intermembrane space. The TIMM8-TIMM13 complex mediates the import of some proteins while the predominant TIMM9-TIMM10 70 kDa complex mediates the import of much more proteins (By similarity).</text>
</comment>
<comment type="subunit">
    <text evidence="1">Heterohexamer; composed of 3 copies of TIMM8 (TIMM8A or TIMM8B) and 3 copies of TIMM13, named soluble 70 kDa complex. Associates with the TIM22 complex, whose core is composed of TIMM22 (By similarity).</text>
</comment>
<comment type="subcellular location">
    <subcellularLocation>
        <location evidence="1">Mitochondrion inner membrane</location>
        <topology evidence="1">Peripheral membrane protein</topology>
        <orientation evidence="1">Intermembrane side</orientation>
    </subcellularLocation>
</comment>
<comment type="domain">
    <text evidence="1">The twin CX3C motif contains 4 conserved Cys residues that form 2 disulfide bonds in the mitochondrial intermembrane space. However, during the transit of timm13-B from cytoplasm into mitochondrion, the Cys residues probably coordinate zinc, thereby preventing folding and allowing its transfer across mitochondrial outer membrane (By similarity).</text>
</comment>
<comment type="similarity">
    <text evidence="2">Belongs to the small Tim family.</text>
</comment>
<evidence type="ECO:0000250" key="1"/>
<evidence type="ECO:0000305" key="2"/>
<name>TI13B_XENLA</name>
<dbReference type="EMBL" id="BC042226">
    <property type="protein sequence ID" value="AAH42226.1"/>
    <property type="molecule type" value="mRNA"/>
</dbReference>
<dbReference type="RefSeq" id="NP_001079427.1">
    <property type="nucleotide sequence ID" value="NM_001085958.1"/>
</dbReference>
<dbReference type="SMR" id="Q8AVK1"/>
<dbReference type="DNASU" id="379114"/>
<dbReference type="GeneID" id="379114"/>
<dbReference type="KEGG" id="xla:379114"/>
<dbReference type="AGR" id="Xenbase:XB-GENE-6251644"/>
<dbReference type="CTD" id="379114"/>
<dbReference type="Xenbase" id="XB-GENE-6251644">
    <property type="gene designation" value="timm13.S"/>
</dbReference>
<dbReference type="OrthoDB" id="7813104at2759"/>
<dbReference type="Proteomes" id="UP000186698">
    <property type="component" value="Chromosome 1S"/>
</dbReference>
<dbReference type="Bgee" id="379114">
    <property type="expression patterns" value="Expressed in neurula embryo and 19 other cell types or tissues"/>
</dbReference>
<dbReference type="GO" id="GO:0005743">
    <property type="term" value="C:mitochondrial inner membrane"/>
    <property type="evidence" value="ECO:0007669"/>
    <property type="project" value="UniProtKB-SubCell"/>
</dbReference>
<dbReference type="GO" id="GO:0046872">
    <property type="term" value="F:metal ion binding"/>
    <property type="evidence" value="ECO:0007669"/>
    <property type="project" value="UniProtKB-KW"/>
</dbReference>
<dbReference type="GO" id="GO:0015031">
    <property type="term" value="P:protein transport"/>
    <property type="evidence" value="ECO:0007669"/>
    <property type="project" value="UniProtKB-KW"/>
</dbReference>
<dbReference type="FunFam" id="1.10.287.810:FF:000001">
    <property type="entry name" value="mitochondrial import inner membrane translocase subunit TIM13"/>
    <property type="match status" value="1"/>
</dbReference>
<dbReference type="Gene3D" id="1.10.287.810">
    <property type="entry name" value="Mitochondrial import inner membrane translocase subunit tim13 like domains"/>
    <property type="match status" value="1"/>
</dbReference>
<dbReference type="InterPro" id="IPR004217">
    <property type="entry name" value="Tim10-like"/>
</dbReference>
<dbReference type="InterPro" id="IPR035427">
    <property type="entry name" value="Tim10-like_dom_sf"/>
</dbReference>
<dbReference type="Pfam" id="PF02953">
    <property type="entry name" value="zf-Tim10_DDP"/>
    <property type="match status" value="1"/>
</dbReference>
<dbReference type="SUPFAM" id="SSF144122">
    <property type="entry name" value="Tim10-like"/>
    <property type="match status" value="1"/>
</dbReference>
<organism>
    <name type="scientific">Xenopus laevis</name>
    <name type="common">African clawed frog</name>
    <dbReference type="NCBI Taxonomy" id="8355"/>
    <lineage>
        <taxon>Eukaryota</taxon>
        <taxon>Metazoa</taxon>
        <taxon>Chordata</taxon>
        <taxon>Craniata</taxon>
        <taxon>Vertebrata</taxon>
        <taxon>Euteleostomi</taxon>
        <taxon>Amphibia</taxon>
        <taxon>Batrachia</taxon>
        <taxon>Anura</taxon>
        <taxon>Pipoidea</taxon>
        <taxon>Pipidae</taxon>
        <taxon>Xenopodinae</taxon>
        <taxon>Xenopus</taxon>
        <taxon>Xenopus</taxon>
    </lineage>
</organism>
<feature type="chain" id="PRO_0000228068" description="Mitochondrial import inner membrane translocase subunit Tim13-B">
    <location>
        <begin position="1"/>
        <end position="96"/>
    </location>
</feature>
<feature type="short sequence motif" description="Twin CX3C motif">
    <location>
        <begin position="47"/>
        <end position="70"/>
    </location>
</feature>
<feature type="disulfide bond" evidence="1">
    <location>
        <begin position="47"/>
        <end position="70"/>
    </location>
</feature>
<feature type="disulfide bond" evidence="1">
    <location>
        <begin position="51"/>
        <end position="66"/>
    </location>
</feature>
<sequence>MDGFGSDFSVGGSSSGKVDTGAIMEQVKVQIAVANAQELLQRMTDKCFRKCIGKPGGSLDNSEQKCVAMCMDRYMDAWNIVSRAYNSRLQRERAKM</sequence>
<gene>
    <name type="primary">timm13-b</name>
    <name type="synonym">tim13a-b</name>
    <name type="synonym">timm13a-b</name>
</gene>
<reference key="1">
    <citation type="submission" date="2003-01" db="EMBL/GenBank/DDBJ databases">
        <authorList>
            <consortium name="NIH - Xenopus Gene Collection (XGC) project"/>
        </authorList>
    </citation>
    <scope>NUCLEOTIDE SEQUENCE [LARGE SCALE MRNA]</scope>
    <source>
        <tissue>Embryo</tissue>
    </source>
</reference>
<keyword id="KW-0143">Chaperone</keyword>
<keyword id="KW-1015">Disulfide bond</keyword>
<keyword id="KW-0472">Membrane</keyword>
<keyword id="KW-0479">Metal-binding</keyword>
<keyword id="KW-0496">Mitochondrion</keyword>
<keyword id="KW-0999">Mitochondrion inner membrane</keyword>
<keyword id="KW-0653">Protein transport</keyword>
<keyword id="KW-1185">Reference proteome</keyword>
<keyword id="KW-0811">Translocation</keyword>
<keyword id="KW-0813">Transport</keyword>
<keyword id="KW-0862">Zinc</keyword>
<proteinExistence type="inferred from homology"/>
<protein>
    <recommendedName>
        <fullName>Mitochondrial import inner membrane translocase subunit Tim13-B</fullName>
    </recommendedName>
</protein>
<accession>Q8AVK1</accession>